<feature type="chain" id="PRO_1000006889" description="Phenylalanine--tRNA ligase alpha subunit">
    <location>
        <begin position="1"/>
        <end position="357"/>
    </location>
</feature>
<feature type="binding site" evidence="1">
    <location>
        <position position="257"/>
    </location>
    <ligand>
        <name>Mg(2+)</name>
        <dbReference type="ChEBI" id="CHEBI:18420"/>
        <note>shared with beta subunit</note>
    </ligand>
</feature>
<dbReference type="EC" id="6.1.1.20" evidence="1"/>
<dbReference type="EMBL" id="CP000362">
    <property type="protein sequence ID" value="ABG30677.1"/>
    <property type="molecule type" value="Genomic_DNA"/>
</dbReference>
<dbReference type="RefSeq" id="WP_011567299.1">
    <property type="nucleotide sequence ID" value="NC_008209.1"/>
</dbReference>
<dbReference type="SMR" id="Q16BG6"/>
<dbReference type="STRING" id="375451.RD1_1012"/>
<dbReference type="KEGG" id="rde:RD1_1012"/>
<dbReference type="eggNOG" id="COG0016">
    <property type="taxonomic scope" value="Bacteria"/>
</dbReference>
<dbReference type="HOGENOM" id="CLU_025086_0_1_5"/>
<dbReference type="OrthoDB" id="9800719at2"/>
<dbReference type="Proteomes" id="UP000007029">
    <property type="component" value="Chromosome"/>
</dbReference>
<dbReference type="GO" id="GO:0005737">
    <property type="term" value="C:cytoplasm"/>
    <property type="evidence" value="ECO:0007669"/>
    <property type="project" value="UniProtKB-SubCell"/>
</dbReference>
<dbReference type="GO" id="GO:0005524">
    <property type="term" value="F:ATP binding"/>
    <property type="evidence" value="ECO:0007669"/>
    <property type="project" value="UniProtKB-UniRule"/>
</dbReference>
<dbReference type="GO" id="GO:0000287">
    <property type="term" value="F:magnesium ion binding"/>
    <property type="evidence" value="ECO:0007669"/>
    <property type="project" value="UniProtKB-UniRule"/>
</dbReference>
<dbReference type="GO" id="GO:0004826">
    <property type="term" value="F:phenylalanine-tRNA ligase activity"/>
    <property type="evidence" value="ECO:0007669"/>
    <property type="project" value="UniProtKB-UniRule"/>
</dbReference>
<dbReference type="GO" id="GO:0000049">
    <property type="term" value="F:tRNA binding"/>
    <property type="evidence" value="ECO:0007669"/>
    <property type="project" value="InterPro"/>
</dbReference>
<dbReference type="GO" id="GO:0006432">
    <property type="term" value="P:phenylalanyl-tRNA aminoacylation"/>
    <property type="evidence" value="ECO:0007669"/>
    <property type="project" value="UniProtKB-UniRule"/>
</dbReference>
<dbReference type="CDD" id="cd00496">
    <property type="entry name" value="PheRS_alpha_core"/>
    <property type="match status" value="1"/>
</dbReference>
<dbReference type="FunFam" id="3.30.930.10:FF:000003">
    <property type="entry name" value="Phenylalanine--tRNA ligase alpha subunit"/>
    <property type="match status" value="1"/>
</dbReference>
<dbReference type="Gene3D" id="3.30.930.10">
    <property type="entry name" value="Bira Bifunctional Protein, Domain 2"/>
    <property type="match status" value="1"/>
</dbReference>
<dbReference type="HAMAP" id="MF_00281">
    <property type="entry name" value="Phe_tRNA_synth_alpha1"/>
    <property type="match status" value="1"/>
</dbReference>
<dbReference type="InterPro" id="IPR006195">
    <property type="entry name" value="aa-tRNA-synth_II"/>
</dbReference>
<dbReference type="InterPro" id="IPR045864">
    <property type="entry name" value="aa-tRNA-synth_II/BPL/LPL"/>
</dbReference>
<dbReference type="InterPro" id="IPR004529">
    <property type="entry name" value="Phe-tRNA-synth_IIc_asu"/>
</dbReference>
<dbReference type="InterPro" id="IPR004188">
    <property type="entry name" value="Phe-tRNA_ligase_II_N"/>
</dbReference>
<dbReference type="InterPro" id="IPR022911">
    <property type="entry name" value="Phe_tRNA_ligase_alpha1_bac"/>
</dbReference>
<dbReference type="InterPro" id="IPR002319">
    <property type="entry name" value="Phenylalanyl-tRNA_Synthase"/>
</dbReference>
<dbReference type="InterPro" id="IPR010978">
    <property type="entry name" value="tRNA-bd_arm"/>
</dbReference>
<dbReference type="NCBIfam" id="TIGR00468">
    <property type="entry name" value="pheS"/>
    <property type="match status" value="1"/>
</dbReference>
<dbReference type="PANTHER" id="PTHR11538:SF41">
    <property type="entry name" value="PHENYLALANINE--TRNA LIGASE, MITOCHONDRIAL"/>
    <property type="match status" value="1"/>
</dbReference>
<dbReference type="PANTHER" id="PTHR11538">
    <property type="entry name" value="PHENYLALANYL-TRNA SYNTHETASE"/>
    <property type="match status" value="1"/>
</dbReference>
<dbReference type="Pfam" id="PF02912">
    <property type="entry name" value="Phe_tRNA-synt_N"/>
    <property type="match status" value="1"/>
</dbReference>
<dbReference type="Pfam" id="PF01409">
    <property type="entry name" value="tRNA-synt_2d"/>
    <property type="match status" value="1"/>
</dbReference>
<dbReference type="SUPFAM" id="SSF55681">
    <property type="entry name" value="Class II aaRS and biotin synthetases"/>
    <property type="match status" value="1"/>
</dbReference>
<dbReference type="SUPFAM" id="SSF46589">
    <property type="entry name" value="tRNA-binding arm"/>
    <property type="match status" value="1"/>
</dbReference>
<dbReference type="PROSITE" id="PS50862">
    <property type="entry name" value="AA_TRNA_LIGASE_II"/>
    <property type="match status" value="1"/>
</dbReference>
<accession>Q16BG6</accession>
<organism>
    <name type="scientific">Roseobacter denitrificans (strain ATCC 33942 / OCh 114)</name>
    <name type="common">Erythrobacter sp. (strain OCh 114)</name>
    <name type="synonym">Roseobacter denitrificans</name>
    <dbReference type="NCBI Taxonomy" id="375451"/>
    <lineage>
        <taxon>Bacteria</taxon>
        <taxon>Pseudomonadati</taxon>
        <taxon>Pseudomonadota</taxon>
        <taxon>Alphaproteobacteria</taxon>
        <taxon>Rhodobacterales</taxon>
        <taxon>Roseobacteraceae</taxon>
        <taxon>Roseobacter</taxon>
    </lineage>
</organism>
<sequence>MDDLKQKYLSQIAAAQDEAGLEAIRLAAVGKKGEVALKMRELGKMTPEERQVAGPALNALKDEINSALAAKKAGLADAALDARLRDEWLDVTLPARGRPRGTIHPVSQVTEEVTAIFGEMGFSVAEGPRIDTDWYNFDALNIPGHHPARAEMDTFYMTRAEGDDRPPHVLRTHTSPVQIRTMEAQGAPLRIICPGGVYRADYDQTHTPMFHQVEGLAIDKDISMANLKWVLEEFFAAFFEIDGIKTRFRASHFPFTEPSAEVDIQCSWIDGQLRIGEGDDWLEVLGSGMVHPKVLAAGGIDPDQWQGFAFGMGIDRIAMLKYGIPDLRAFFDSDLRWLRHYGFASLDQPTLHGGLSR</sequence>
<evidence type="ECO:0000255" key="1">
    <source>
        <dbReference type="HAMAP-Rule" id="MF_00281"/>
    </source>
</evidence>
<comment type="catalytic activity">
    <reaction evidence="1">
        <text>tRNA(Phe) + L-phenylalanine + ATP = L-phenylalanyl-tRNA(Phe) + AMP + diphosphate + H(+)</text>
        <dbReference type="Rhea" id="RHEA:19413"/>
        <dbReference type="Rhea" id="RHEA-COMP:9668"/>
        <dbReference type="Rhea" id="RHEA-COMP:9699"/>
        <dbReference type="ChEBI" id="CHEBI:15378"/>
        <dbReference type="ChEBI" id="CHEBI:30616"/>
        <dbReference type="ChEBI" id="CHEBI:33019"/>
        <dbReference type="ChEBI" id="CHEBI:58095"/>
        <dbReference type="ChEBI" id="CHEBI:78442"/>
        <dbReference type="ChEBI" id="CHEBI:78531"/>
        <dbReference type="ChEBI" id="CHEBI:456215"/>
        <dbReference type="EC" id="6.1.1.20"/>
    </reaction>
</comment>
<comment type="cofactor">
    <cofactor evidence="1">
        <name>Mg(2+)</name>
        <dbReference type="ChEBI" id="CHEBI:18420"/>
    </cofactor>
    <text evidence="1">Binds 2 magnesium ions per tetramer.</text>
</comment>
<comment type="subunit">
    <text evidence="1">Tetramer of two alpha and two beta subunits.</text>
</comment>
<comment type="subcellular location">
    <subcellularLocation>
        <location evidence="1">Cytoplasm</location>
    </subcellularLocation>
</comment>
<comment type="similarity">
    <text evidence="1">Belongs to the class-II aminoacyl-tRNA synthetase family. Phe-tRNA synthetase alpha subunit type 1 subfamily.</text>
</comment>
<protein>
    <recommendedName>
        <fullName evidence="1">Phenylalanine--tRNA ligase alpha subunit</fullName>
        <ecNumber evidence="1">6.1.1.20</ecNumber>
    </recommendedName>
    <alternativeName>
        <fullName evidence="1">Phenylalanyl-tRNA synthetase alpha subunit</fullName>
        <shortName evidence="1">PheRS</shortName>
    </alternativeName>
</protein>
<proteinExistence type="inferred from homology"/>
<gene>
    <name evidence="1" type="primary">pheS</name>
    <name type="ordered locus">RD1_1012</name>
</gene>
<keyword id="KW-0030">Aminoacyl-tRNA synthetase</keyword>
<keyword id="KW-0067">ATP-binding</keyword>
<keyword id="KW-0963">Cytoplasm</keyword>
<keyword id="KW-0436">Ligase</keyword>
<keyword id="KW-0460">Magnesium</keyword>
<keyword id="KW-0479">Metal-binding</keyword>
<keyword id="KW-0547">Nucleotide-binding</keyword>
<keyword id="KW-0648">Protein biosynthesis</keyword>
<keyword id="KW-1185">Reference proteome</keyword>
<reference key="1">
    <citation type="journal article" date="2007" name="J. Bacteriol.">
        <title>The complete genome sequence of Roseobacter denitrificans reveals a mixotrophic rather than photosynthetic metabolism.</title>
        <authorList>
            <person name="Swingley W.D."/>
            <person name="Sadekar S."/>
            <person name="Mastrian S.D."/>
            <person name="Matthies H.J."/>
            <person name="Hao J."/>
            <person name="Ramos H."/>
            <person name="Acharya C.R."/>
            <person name="Conrad A.L."/>
            <person name="Taylor H.L."/>
            <person name="Dejesa L.C."/>
            <person name="Shah M.K."/>
            <person name="O'Huallachain M.E."/>
            <person name="Lince M.T."/>
            <person name="Blankenship R.E."/>
            <person name="Beatty J.T."/>
            <person name="Touchman J.W."/>
        </authorList>
    </citation>
    <scope>NUCLEOTIDE SEQUENCE [LARGE SCALE GENOMIC DNA]</scope>
    <source>
        <strain>ATCC 33942 / OCh 114</strain>
    </source>
</reference>
<name>SYFA_ROSDO</name>